<accession>B1XFV4</accession>
<keyword id="KW-0010">Activator</keyword>
<keyword id="KW-0238">DNA-binding</keyword>
<keyword id="KW-0678">Repressor</keyword>
<keyword id="KW-0804">Transcription</keyword>
<keyword id="KW-0805">Transcription regulation</keyword>
<sequence>MESPLGSDLARLVRIWRALIDHRLKPLELTQTHWVTLHNIHQLPPDQSQIQLAKAIGIEQPSLVRTLDQLEEKGLISRQTCASDRRAKRIKLTEKAEPLISEMEAVINKTRAEILHGISAEELEQLITLIAKLEHNIIELQAKG</sequence>
<feature type="chain" id="PRO_1000188012" description="Transcriptional regulator SlyA">
    <location>
        <begin position="1"/>
        <end position="144"/>
    </location>
</feature>
<feature type="domain" description="HTH marR-type" evidence="1">
    <location>
        <begin position="2"/>
        <end position="135"/>
    </location>
</feature>
<feature type="DNA-binding region" description="H-T-H motif" evidence="1">
    <location>
        <begin position="49"/>
        <end position="72"/>
    </location>
</feature>
<proteinExistence type="inferred from homology"/>
<gene>
    <name evidence="1" type="primary">slyA</name>
    <name type="ordered locus">ECDH10B_1776</name>
</gene>
<organism>
    <name type="scientific">Escherichia coli (strain K12 / DH10B)</name>
    <dbReference type="NCBI Taxonomy" id="316385"/>
    <lineage>
        <taxon>Bacteria</taxon>
        <taxon>Pseudomonadati</taxon>
        <taxon>Pseudomonadota</taxon>
        <taxon>Gammaproteobacteria</taxon>
        <taxon>Enterobacterales</taxon>
        <taxon>Enterobacteriaceae</taxon>
        <taxon>Escherichia</taxon>
    </lineage>
</organism>
<reference key="1">
    <citation type="journal article" date="2008" name="J. Bacteriol.">
        <title>The complete genome sequence of Escherichia coli DH10B: insights into the biology of a laboratory workhorse.</title>
        <authorList>
            <person name="Durfee T."/>
            <person name="Nelson R."/>
            <person name="Baldwin S."/>
            <person name="Plunkett G. III"/>
            <person name="Burland V."/>
            <person name="Mau B."/>
            <person name="Petrosino J.F."/>
            <person name="Qin X."/>
            <person name="Muzny D.M."/>
            <person name="Ayele M."/>
            <person name="Gibbs R.A."/>
            <person name="Csorgo B."/>
            <person name="Posfai G."/>
            <person name="Weinstock G.M."/>
            <person name="Blattner F.R."/>
        </authorList>
    </citation>
    <scope>NUCLEOTIDE SEQUENCE [LARGE SCALE GENOMIC DNA]</scope>
    <source>
        <strain>K12 / DH10B</strain>
    </source>
</reference>
<evidence type="ECO:0000255" key="1">
    <source>
        <dbReference type="HAMAP-Rule" id="MF_01819"/>
    </source>
</evidence>
<comment type="function">
    <text evidence="1">Transcription regulator that can specifically activate or repress expression of target genes.</text>
</comment>
<comment type="subunit">
    <text evidence="1">Homodimer.</text>
</comment>
<comment type="similarity">
    <text evidence="1">Belongs to the SlyA family.</text>
</comment>
<protein>
    <recommendedName>
        <fullName evidence="1">Transcriptional regulator SlyA</fullName>
    </recommendedName>
</protein>
<dbReference type="EMBL" id="CP000948">
    <property type="protein sequence ID" value="ACB02848.1"/>
    <property type="molecule type" value="Genomic_DNA"/>
</dbReference>
<dbReference type="RefSeq" id="WP_001296943.1">
    <property type="nucleotide sequence ID" value="NC_010473.1"/>
</dbReference>
<dbReference type="SMR" id="B1XFV4"/>
<dbReference type="GeneID" id="93775796"/>
<dbReference type="KEGG" id="ecd:ECDH10B_1776"/>
<dbReference type="HOGENOM" id="CLU_083287_18_2_6"/>
<dbReference type="GO" id="GO:0003677">
    <property type="term" value="F:DNA binding"/>
    <property type="evidence" value="ECO:0007669"/>
    <property type="project" value="UniProtKB-UniRule"/>
</dbReference>
<dbReference type="GO" id="GO:0003700">
    <property type="term" value="F:DNA-binding transcription factor activity"/>
    <property type="evidence" value="ECO:0007669"/>
    <property type="project" value="UniProtKB-UniRule"/>
</dbReference>
<dbReference type="GO" id="GO:0006950">
    <property type="term" value="P:response to stress"/>
    <property type="evidence" value="ECO:0007669"/>
    <property type="project" value="TreeGrafter"/>
</dbReference>
<dbReference type="FunFam" id="1.10.10.10:FF:000261">
    <property type="entry name" value="Transcriptional regulator SlyA"/>
    <property type="match status" value="1"/>
</dbReference>
<dbReference type="Gene3D" id="1.10.10.10">
    <property type="entry name" value="Winged helix-like DNA-binding domain superfamily/Winged helix DNA-binding domain"/>
    <property type="match status" value="1"/>
</dbReference>
<dbReference type="HAMAP" id="MF_01819">
    <property type="entry name" value="HTH_type_SlyA"/>
    <property type="match status" value="1"/>
</dbReference>
<dbReference type="InterPro" id="IPR000835">
    <property type="entry name" value="HTH_MarR-typ"/>
</dbReference>
<dbReference type="InterPro" id="IPR039422">
    <property type="entry name" value="MarR/SlyA-like"/>
</dbReference>
<dbReference type="InterPro" id="IPR023187">
    <property type="entry name" value="Tscrpt_reg_MarR-type_CS"/>
</dbReference>
<dbReference type="InterPro" id="IPR023071">
    <property type="entry name" value="Tscrpt_reg_SlyA"/>
</dbReference>
<dbReference type="InterPro" id="IPR036388">
    <property type="entry name" value="WH-like_DNA-bd_sf"/>
</dbReference>
<dbReference type="InterPro" id="IPR036390">
    <property type="entry name" value="WH_DNA-bd_sf"/>
</dbReference>
<dbReference type="NCBIfam" id="NF002926">
    <property type="entry name" value="PRK03573.1"/>
    <property type="match status" value="1"/>
</dbReference>
<dbReference type="PANTHER" id="PTHR33164:SF64">
    <property type="entry name" value="TRANSCRIPTIONAL REGULATOR SLYA"/>
    <property type="match status" value="1"/>
</dbReference>
<dbReference type="PANTHER" id="PTHR33164">
    <property type="entry name" value="TRANSCRIPTIONAL REGULATOR, MARR FAMILY"/>
    <property type="match status" value="1"/>
</dbReference>
<dbReference type="Pfam" id="PF01047">
    <property type="entry name" value="MarR"/>
    <property type="match status" value="1"/>
</dbReference>
<dbReference type="PRINTS" id="PR00598">
    <property type="entry name" value="HTHMARR"/>
</dbReference>
<dbReference type="SMART" id="SM00347">
    <property type="entry name" value="HTH_MARR"/>
    <property type="match status" value="1"/>
</dbReference>
<dbReference type="SUPFAM" id="SSF46785">
    <property type="entry name" value="Winged helix' DNA-binding domain"/>
    <property type="match status" value="1"/>
</dbReference>
<dbReference type="PROSITE" id="PS01117">
    <property type="entry name" value="HTH_MARR_1"/>
    <property type="match status" value="1"/>
</dbReference>
<dbReference type="PROSITE" id="PS50995">
    <property type="entry name" value="HTH_MARR_2"/>
    <property type="match status" value="1"/>
</dbReference>
<name>SLYA_ECODH</name>